<organism>
    <name type="scientific">Thermus aquaticus</name>
    <dbReference type="NCBI Taxonomy" id="271"/>
    <lineage>
        <taxon>Bacteria</taxon>
        <taxon>Thermotogati</taxon>
        <taxon>Deinococcota</taxon>
        <taxon>Deinococci</taxon>
        <taxon>Thermales</taxon>
        <taxon>Thermaceae</taxon>
        <taxon>Thermus</taxon>
    </lineage>
</organism>
<feature type="chain" id="PRO_0000083772" description="3-isopropylmalate dehydrogenase">
    <location>
        <begin position="1"/>
        <end position="344"/>
    </location>
</feature>
<feature type="binding site" evidence="1">
    <location>
        <begin position="74"/>
        <end position="87"/>
    </location>
    <ligand>
        <name>NAD(+)</name>
        <dbReference type="ChEBI" id="CHEBI:57540"/>
    </ligand>
</feature>
<feature type="binding site" evidence="1">
    <location>
        <position position="94"/>
    </location>
    <ligand>
        <name>substrate</name>
    </ligand>
</feature>
<feature type="binding site" evidence="1">
    <location>
        <position position="104"/>
    </location>
    <ligand>
        <name>substrate</name>
    </ligand>
</feature>
<feature type="binding site" evidence="1">
    <location>
        <position position="132"/>
    </location>
    <ligand>
        <name>substrate</name>
    </ligand>
</feature>
<feature type="binding site" evidence="1">
    <location>
        <position position="217"/>
    </location>
    <ligand>
        <name>Mg(2+)</name>
        <dbReference type="ChEBI" id="CHEBI:18420"/>
    </ligand>
</feature>
<feature type="binding site" evidence="1">
    <location>
        <position position="217"/>
    </location>
    <ligand>
        <name>substrate</name>
    </ligand>
</feature>
<feature type="binding site" evidence="1">
    <location>
        <position position="241"/>
    </location>
    <ligand>
        <name>Mg(2+)</name>
        <dbReference type="ChEBI" id="CHEBI:18420"/>
    </ligand>
</feature>
<feature type="binding site" evidence="1">
    <location>
        <position position="245"/>
    </location>
    <ligand>
        <name>Mg(2+)</name>
        <dbReference type="ChEBI" id="CHEBI:18420"/>
    </ligand>
</feature>
<feature type="binding site" evidence="1">
    <location>
        <begin position="274"/>
        <end position="286"/>
    </location>
    <ligand>
        <name>NAD(+)</name>
        <dbReference type="ChEBI" id="CHEBI:57540"/>
    </ligand>
</feature>
<feature type="site" description="Important for catalysis" evidence="1">
    <location>
        <position position="139"/>
    </location>
</feature>
<feature type="site" description="Important for catalysis" evidence="1">
    <location>
        <position position="185"/>
    </location>
</feature>
<name>LEU3_THEAQ</name>
<dbReference type="EC" id="1.1.1.85"/>
<dbReference type="EMBL" id="D10700">
    <property type="protein sequence ID" value="BAA01542.1"/>
    <property type="molecule type" value="Genomic_DNA"/>
</dbReference>
<dbReference type="PIR" id="S41223">
    <property type="entry name" value="DETWIT"/>
</dbReference>
<dbReference type="RefSeq" id="WP_053767878.1">
    <property type="nucleotide sequence ID" value="NZ_LHCI01000106.1"/>
</dbReference>
<dbReference type="SMR" id="P24098"/>
<dbReference type="BRENDA" id="1.1.1.85">
    <property type="organism ID" value="6334"/>
</dbReference>
<dbReference type="UniPathway" id="UPA00048">
    <property type="reaction ID" value="UER00072"/>
</dbReference>
<dbReference type="GO" id="GO:0005829">
    <property type="term" value="C:cytosol"/>
    <property type="evidence" value="ECO:0007669"/>
    <property type="project" value="TreeGrafter"/>
</dbReference>
<dbReference type="GO" id="GO:0003862">
    <property type="term" value="F:3-isopropylmalate dehydrogenase activity"/>
    <property type="evidence" value="ECO:0007669"/>
    <property type="project" value="UniProtKB-UniRule"/>
</dbReference>
<dbReference type="GO" id="GO:0000287">
    <property type="term" value="F:magnesium ion binding"/>
    <property type="evidence" value="ECO:0007669"/>
    <property type="project" value="InterPro"/>
</dbReference>
<dbReference type="GO" id="GO:0051287">
    <property type="term" value="F:NAD binding"/>
    <property type="evidence" value="ECO:0007669"/>
    <property type="project" value="InterPro"/>
</dbReference>
<dbReference type="GO" id="GO:0009098">
    <property type="term" value="P:L-leucine biosynthetic process"/>
    <property type="evidence" value="ECO:0007669"/>
    <property type="project" value="UniProtKB-UniRule"/>
</dbReference>
<dbReference type="FunFam" id="3.40.718.10:FF:000006">
    <property type="entry name" value="3-isopropylmalate dehydrogenase"/>
    <property type="match status" value="1"/>
</dbReference>
<dbReference type="Gene3D" id="3.40.718.10">
    <property type="entry name" value="Isopropylmalate Dehydrogenase"/>
    <property type="match status" value="1"/>
</dbReference>
<dbReference type="HAMAP" id="MF_01033">
    <property type="entry name" value="LeuB_type1"/>
    <property type="match status" value="1"/>
</dbReference>
<dbReference type="InterPro" id="IPR019818">
    <property type="entry name" value="IsoCit/isopropylmalate_DH_CS"/>
</dbReference>
<dbReference type="InterPro" id="IPR024084">
    <property type="entry name" value="IsoPropMal-DH-like_dom"/>
</dbReference>
<dbReference type="InterPro" id="IPR004429">
    <property type="entry name" value="Isopropylmalate_DH"/>
</dbReference>
<dbReference type="NCBIfam" id="TIGR00169">
    <property type="entry name" value="leuB"/>
    <property type="match status" value="1"/>
</dbReference>
<dbReference type="PANTHER" id="PTHR42979">
    <property type="entry name" value="3-ISOPROPYLMALATE DEHYDROGENASE"/>
    <property type="match status" value="1"/>
</dbReference>
<dbReference type="PANTHER" id="PTHR42979:SF1">
    <property type="entry name" value="3-ISOPROPYLMALATE DEHYDROGENASE"/>
    <property type="match status" value="1"/>
</dbReference>
<dbReference type="Pfam" id="PF00180">
    <property type="entry name" value="Iso_dh"/>
    <property type="match status" value="1"/>
</dbReference>
<dbReference type="SMART" id="SM01329">
    <property type="entry name" value="Iso_dh"/>
    <property type="match status" value="1"/>
</dbReference>
<dbReference type="SUPFAM" id="SSF53659">
    <property type="entry name" value="Isocitrate/Isopropylmalate dehydrogenase-like"/>
    <property type="match status" value="1"/>
</dbReference>
<dbReference type="PROSITE" id="PS00470">
    <property type="entry name" value="IDH_IMDH"/>
    <property type="match status" value="1"/>
</dbReference>
<evidence type="ECO:0000250" key="1"/>
<evidence type="ECO:0000305" key="2"/>
<gene>
    <name type="primary">leuB</name>
</gene>
<reference key="1">
    <citation type="journal article" date="1991" name="J. Biochem.">
        <title>Molecular cloning and nucleotide sequence of 3-isopropylmalate dehydrogenase gene (leuB) from an extreme thermophile, Thermus aquaticus YT-1.</title>
        <authorList>
            <person name="Kirino H."/>
            <person name="Oshima T."/>
        </authorList>
    </citation>
    <scope>NUCLEOTIDE SEQUENCE [GENOMIC DNA]</scope>
    <source>
        <strain>ATCC 25104 / DSM 625 / JCM 10724 / NBRC 103206 / NCIMB 11243 / YT-1</strain>
    </source>
</reference>
<protein>
    <recommendedName>
        <fullName>3-isopropylmalate dehydrogenase</fullName>
        <ecNumber>1.1.1.85</ecNumber>
    </recommendedName>
    <alternativeName>
        <fullName>3-IPM-DH</fullName>
    </alternativeName>
    <alternativeName>
        <fullName>Beta-IPM dehydrogenase</fullName>
        <shortName>IMDH</shortName>
    </alternativeName>
</protein>
<keyword id="KW-0028">Amino-acid biosynthesis</keyword>
<keyword id="KW-0100">Branched-chain amino acid biosynthesis</keyword>
<keyword id="KW-0963">Cytoplasm</keyword>
<keyword id="KW-0432">Leucine biosynthesis</keyword>
<keyword id="KW-0460">Magnesium</keyword>
<keyword id="KW-0464">Manganese</keyword>
<keyword id="KW-0479">Metal-binding</keyword>
<keyword id="KW-0520">NAD</keyword>
<keyword id="KW-0560">Oxidoreductase</keyword>
<sequence length="344" mass="36949">MRVAVLPGDGIGPEVTEAALRVLKALDEREGLGLTYETFPFGGAAIDGYGEPFPEVTRKGVEAAEAVLLGSVGGPKWDALPRKIRPESGLLALRKSQDLFANLRPAKVFPGLERLSPLKEEIARGVDVLIVRELTGGIYFGEPRGMSEAEAWNTERYSKPEVERVAKVAFEAARKRRRHLTSVDKANVLEVGEFWRKTVEEVHKGYPDVALDHQYVDAMAMHLVKNPARFDVVVTGNIFGDILSDLASVLPGSLGLLPSASLGRGTPVFEPVHGSAPDIAGKGIANPTAAILSAAMMLEHAFGLVELARRVEAAVAKALRETPPPDLGGSAGTQAFTEEVLRHL</sequence>
<comment type="function">
    <text>Catalyzes the oxidation of 3-carboxy-2-hydroxy-4-methylpentanoate (3-isopropylmalate) to 3-carboxy-4-methyl-2-oxopentanoate. The product decarboxylates to 4-methyl-2 oxopentanoate.</text>
</comment>
<comment type="catalytic activity">
    <reaction>
        <text>(2R,3S)-3-isopropylmalate + NAD(+) = 4-methyl-2-oxopentanoate + CO2 + NADH</text>
        <dbReference type="Rhea" id="RHEA:32271"/>
        <dbReference type="ChEBI" id="CHEBI:16526"/>
        <dbReference type="ChEBI" id="CHEBI:17865"/>
        <dbReference type="ChEBI" id="CHEBI:35121"/>
        <dbReference type="ChEBI" id="CHEBI:57540"/>
        <dbReference type="ChEBI" id="CHEBI:57945"/>
        <dbReference type="EC" id="1.1.1.85"/>
    </reaction>
</comment>
<comment type="cofactor">
    <cofactor evidence="1">
        <name>Mg(2+)</name>
        <dbReference type="ChEBI" id="CHEBI:18420"/>
    </cofactor>
    <cofactor evidence="1">
        <name>Mn(2+)</name>
        <dbReference type="ChEBI" id="CHEBI:29035"/>
    </cofactor>
    <text evidence="1">Binds 1 Mg(2+) or Mn(2+) ion per subunit.</text>
</comment>
<comment type="pathway">
    <text>Amino-acid biosynthesis; L-leucine biosynthesis; L-leucine from 3-methyl-2-oxobutanoate: step 3/4.</text>
</comment>
<comment type="subunit">
    <text>Homodimer.</text>
</comment>
<comment type="subcellular location">
    <subcellularLocation>
        <location>Cytoplasm</location>
    </subcellularLocation>
</comment>
<comment type="similarity">
    <text evidence="2">Belongs to the isocitrate and isopropylmalate dehydrogenases family. LeuB type 1 subfamily.</text>
</comment>
<accession>P24098</accession>
<proteinExistence type="inferred from homology"/>